<gene>
    <name type="primary">SASP-C4</name>
</gene>
<accession>P04834</accession>
<organism>
    <name type="scientific">Priestia megaterium</name>
    <name type="common">Bacillus megaterium</name>
    <dbReference type="NCBI Taxonomy" id="1404"/>
    <lineage>
        <taxon>Bacteria</taxon>
        <taxon>Bacillati</taxon>
        <taxon>Bacillota</taxon>
        <taxon>Bacilli</taxon>
        <taxon>Bacillales</taxon>
        <taxon>Bacillaceae</taxon>
        <taxon>Priestia</taxon>
    </lineage>
</organism>
<sequence length="69" mass="7347">MANNKSSNNNELLVYGAEQAIDQMKYEIASEFGVNLGADTTARANGSVGGEITKRLVQLAEQQLGGGRF</sequence>
<reference key="1">
    <citation type="journal article" date="1986" name="J. Bacteriol.">
        <title>Genes for Bacillus megaterium small, acid-soluble spore proteins: cloning and nucleotide sequence of three additional genes from this multigene family.</title>
        <authorList>
            <person name="Fliss E.R."/>
            <person name="Loshon C.A."/>
            <person name="Setlow P."/>
        </authorList>
    </citation>
    <scope>NUCLEOTIDE SEQUENCE [GENOMIC DNA]</scope>
</reference>
<protein>
    <recommendedName>
        <fullName>Small, acid-soluble spore protein C4</fullName>
        <shortName>SASP</shortName>
    </recommendedName>
</protein>
<evidence type="ECO:0000305" key="1"/>
<proteinExistence type="inferred from homology"/>
<dbReference type="EMBL" id="M14110">
    <property type="protein sequence ID" value="AAA22283.1"/>
    <property type="molecule type" value="Genomic_DNA"/>
</dbReference>
<dbReference type="PIR" id="B24543">
    <property type="entry name" value="B24543"/>
</dbReference>
<dbReference type="RefSeq" id="WP_013058452.1">
    <property type="nucleotide sequence ID" value="NZ_WWFB01000002.1"/>
</dbReference>
<dbReference type="SMR" id="P04834"/>
<dbReference type="OMA" id="MKYEIAR"/>
<dbReference type="GO" id="GO:0003690">
    <property type="term" value="F:double-stranded DNA binding"/>
    <property type="evidence" value="ECO:0007669"/>
    <property type="project" value="InterPro"/>
</dbReference>
<dbReference type="GO" id="GO:0006265">
    <property type="term" value="P:DNA topological change"/>
    <property type="evidence" value="ECO:0007669"/>
    <property type="project" value="InterPro"/>
</dbReference>
<dbReference type="GO" id="GO:0030435">
    <property type="term" value="P:sporulation resulting in formation of a cellular spore"/>
    <property type="evidence" value="ECO:0007669"/>
    <property type="project" value="UniProtKB-KW"/>
</dbReference>
<dbReference type="Gene3D" id="6.10.10.80">
    <property type="entry name" value="Small, acid-soluble spore protein, alpha/beta type-like"/>
    <property type="match status" value="1"/>
</dbReference>
<dbReference type="InterPro" id="IPR001448">
    <property type="entry name" value="SASP_alpha/beta-type"/>
</dbReference>
<dbReference type="InterPro" id="IPR018126">
    <property type="entry name" value="SASP_alpha/beta-type_CS"/>
</dbReference>
<dbReference type="InterPro" id="IPR050847">
    <property type="entry name" value="SASP_DNA-binding"/>
</dbReference>
<dbReference type="InterPro" id="IPR038300">
    <property type="entry name" value="SASP_sf_alpha/beta"/>
</dbReference>
<dbReference type="PANTHER" id="PTHR36107">
    <property type="entry name" value="SMALL, ACID-SOLUBLE SPORE PROTEIN A"/>
    <property type="match status" value="1"/>
</dbReference>
<dbReference type="PANTHER" id="PTHR36107:SF1">
    <property type="entry name" value="SMALL, ACID-SOLUBLE SPORE PROTEIN A"/>
    <property type="match status" value="1"/>
</dbReference>
<dbReference type="Pfam" id="PF00269">
    <property type="entry name" value="SASP"/>
    <property type="match status" value="1"/>
</dbReference>
<dbReference type="PROSITE" id="PS00304">
    <property type="entry name" value="SASP_1"/>
    <property type="match status" value="1"/>
</dbReference>
<dbReference type="PROSITE" id="PS00684">
    <property type="entry name" value="SASP_2"/>
    <property type="match status" value="1"/>
</dbReference>
<feature type="chain" id="PRO_0000196297" description="Small, acid-soluble spore protein C4">
    <location>
        <begin position="1"/>
        <end position="69"/>
    </location>
</feature>
<feature type="site" description="Cleavage; by spore protease">
    <location>
        <begin position="27"/>
        <end position="28"/>
    </location>
</feature>
<name>SAS4_PRIMG</name>
<comment type="function">
    <text>SASP are bound to spore DNA. They are double-stranded DNA-binding proteins that cause DNA to change to an a-like conformation. They protect the DNA backbone from chemical and enzymatic cleavage and are thus involved in dormant spore's high resistance to UV light.</text>
</comment>
<comment type="miscellaneous">
    <text>SASP are degraded in the first minutes of spore germination and provide amino acids for both new protein synthesis and metabolism.</text>
</comment>
<comment type="similarity">
    <text evidence="1">Belongs to the alpha/beta-type SASP family.</text>
</comment>
<keyword id="KW-0238">DNA-binding</keyword>
<keyword id="KW-0749">Sporulation</keyword>